<gene>
    <name evidence="1" type="primary">NA</name>
</gene>
<accession>Q90021</accession>
<feature type="chain" id="PRO_0000078741" description="Neuraminidase">
    <location>
        <begin position="1"/>
        <end position="466"/>
    </location>
</feature>
<feature type="topological domain" description="Intravirion" evidence="1">
    <location>
        <begin position="1"/>
        <end position="8"/>
    </location>
</feature>
<feature type="transmembrane region" description="Helical" evidence="1">
    <location>
        <begin position="9"/>
        <end position="31"/>
    </location>
</feature>
<feature type="topological domain" description="Virion surface" evidence="1">
    <location>
        <begin position="32"/>
        <end position="466"/>
    </location>
</feature>
<feature type="region of interest" description="Involved in apical transport and lipid raft association" evidence="1">
    <location>
        <begin position="13"/>
        <end position="35"/>
    </location>
</feature>
<feature type="region of interest" description="Hypervariable stalk region" evidence="1">
    <location>
        <begin position="38"/>
        <end position="86"/>
    </location>
</feature>
<feature type="region of interest" description="Head of neuraminidase" evidence="1">
    <location>
        <begin position="89"/>
        <end position="466"/>
    </location>
</feature>
<feature type="active site" description="Proton donor/acceptor" evidence="1">
    <location>
        <position position="149"/>
    </location>
</feature>
<feature type="active site" description="Nucleophile" evidence="1">
    <location>
        <position position="409"/>
    </location>
</feature>
<feature type="binding site" evidence="1">
    <location>
        <position position="116"/>
    </location>
    <ligand>
        <name>substrate</name>
    </ligand>
</feature>
<feature type="binding site" evidence="1">
    <location>
        <position position="150"/>
    </location>
    <ligand>
        <name>substrate</name>
    </ligand>
</feature>
<feature type="binding site" evidence="1">
    <location>
        <begin position="275"/>
        <end position="276"/>
    </location>
    <ligand>
        <name>substrate</name>
    </ligand>
</feature>
<feature type="binding site" evidence="1">
    <location>
        <position position="292"/>
    </location>
    <ligand>
        <name>substrate</name>
    </ligand>
</feature>
<feature type="binding site" evidence="1">
    <location>
        <position position="293"/>
    </location>
    <ligand>
        <name>Ca(2+)</name>
        <dbReference type="ChEBI" id="CHEBI:29108"/>
    </ligand>
</feature>
<feature type="binding site" evidence="1">
    <location>
        <position position="324"/>
    </location>
    <ligand>
        <name>Ca(2+)</name>
        <dbReference type="ChEBI" id="CHEBI:29108"/>
    </ligand>
</feature>
<feature type="binding site" evidence="1">
    <location>
        <position position="374"/>
    </location>
    <ligand>
        <name>substrate</name>
    </ligand>
</feature>
<feature type="glycosylation site" description="N-linked (GlcNAc...) asparagine; by host" evidence="1">
    <location>
        <position position="56"/>
    </location>
</feature>
<feature type="glycosylation site" description="N-linked (GlcNAc...) asparagine; by host" evidence="1">
    <location>
        <position position="64"/>
    </location>
</feature>
<feature type="glycosylation site" description="N-linked (GlcNAc...) asparagine; by host" evidence="1">
    <location>
        <position position="144"/>
    </location>
</feature>
<feature type="glycosylation site" description="N-linked (GlcNAc...) asparagine; by host" evidence="1">
    <location>
        <position position="284"/>
    </location>
</feature>
<feature type="disulfide bond" evidence="1">
    <location>
        <begin position="87"/>
        <end position="420"/>
    </location>
</feature>
<feature type="disulfide bond" evidence="1">
    <location>
        <begin position="122"/>
        <end position="127"/>
    </location>
</feature>
<feature type="disulfide bond" evidence="1">
    <location>
        <begin position="182"/>
        <end position="229"/>
    </location>
</feature>
<feature type="disulfide bond" evidence="1">
    <location>
        <begin position="231"/>
        <end position="236"/>
    </location>
</feature>
<feature type="disulfide bond" evidence="1">
    <location>
        <begin position="277"/>
        <end position="291"/>
    </location>
</feature>
<feature type="disulfide bond" evidence="1">
    <location>
        <begin position="279"/>
        <end position="289"/>
    </location>
</feature>
<feature type="disulfide bond" evidence="1">
    <location>
        <begin position="318"/>
        <end position="337"/>
    </location>
</feature>
<feature type="disulfide bond" evidence="1">
    <location>
        <begin position="424"/>
        <end position="447"/>
    </location>
</feature>
<sequence>MLPSTIQTLTLFLTSGGVLLSLYVSASLSYLLYSDILLKFSPTEITAPKVPLDCANASNVQAVNRSATKGMTLLLSEPEWTYPRLSCQGSTFQKALLISPHRFGESRGNSAPLIIREPFIACGPKECKHFALTHYAAQPGGYYNGTREDRNKLRHLISVKLGKIPTVENSIFHMAAWSGSACHDGREWTYIGVDGPDSNALIKIKYGEAYTDTYHSYANNILRTQESACNCIGGDCYLMITDGSASGISKCRFLKIREGRIIKEIFPTGRVEHTEECTCGFASNKTIECACRDNSYTAKRPFVKLNVETDTAEIRLMCTETYLDTPRPDDGSITGPCESNGDKGRGGIKGGFVHQRMASKIGRWYSRTMSKTERMGMELYVKYDGDPWTDSDALAPSGVMVSMKEPGWYSFGFEIKDKKCDVPCIGIEMVHDGGKKTWHSAATAIYCLMGSGQLLWDTVTGVDMAL</sequence>
<keyword id="KW-0106">Calcium</keyword>
<keyword id="KW-1015">Disulfide bond</keyword>
<keyword id="KW-0325">Glycoprotein</keyword>
<keyword id="KW-0326">Glycosidase</keyword>
<keyword id="KW-1032">Host cell membrane</keyword>
<keyword id="KW-1043">Host membrane</keyword>
<keyword id="KW-0378">Hydrolase</keyword>
<keyword id="KW-0472">Membrane</keyword>
<keyword id="KW-0479">Metal-binding</keyword>
<keyword id="KW-0735">Signal-anchor</keyword>
<keyword id="KW-0812">Transmembrane</keyword>
<keyword id="KW-1133">Transmembrane helix</keyword>
<keyword id="KW-0946">Virion</keyword>
<name>NRAM_INBYB</name>
<dbReference type="EC" id="3.2.1.18" evidence="1"/>
<dbReference type="EMBL" id="X67013">
    <property type="protein sequence ID" value="CAA47401.1"/>
    <property type="molecule type" value="Genomic_RNA"/>
</dbReference>
<dbReference type="PIR" id="S23855">
    <property type="entry name" value="S23855"/>
</dbReference>
<dbReference type="SMR" id="Q90021"/>
<dbReference type="GlyCosmos" id="Q90021">
    <property type="glycosylation" value="4 sites, No reported glycans"/>
</dbReference>
<dbReference type="GO" id="GO:0020002">
    <property type="term" value="C:host cell plasma membrane"/>
    <property type="evidence" value="ECO:0007669"/>
    <property type="project" value="UniProtKB-SubCell"/>
</dbReference>
<dbReference type="GO" id="GO:0016020">
    <property type="term" value="C:membrane"/>
    <property type="evidence" value="ECO:0007669"/>
    <property type="project" value="UniProtKB-UniRule"/>
</dbReference>
<dbReference type="GO" id="GO:0055036">
    <property type="term" value="C:virion membrane"/>
    <property type="evidence" value="ECO:0007669"/>
    <property type="project" value="UniProtKB-SubCell"/>
</dbReference>
<dbReference type="GO" id="GO:0004308">
    <property type="term" value="F:exo-alpha-sialidase activity"/>
    <property type="evidence" value="ECO:0007669"/>
    <property type="project" value="UniProtKB-UniRule"/>
</dbReference>
<dbReference type="GO" id="GO:0046872">
    <property type="term" value="F:metal ion binding"/>
    <property type="evidence" value="ECO:0007669"/>
    <property type="project" value="UniProtKB-UniRule"/>
</dbReference>
<dbReference type="GO" id="GO:0005975">
    <property type="term" value="P:carbohydrate metabolic process"/>
    <property type="evidence" value="ECO:0007669"/>
    <property type="project" value="InterPro"/>
</dbReference>
<dbReference type="GO" id="GO:0046761">
    <property type="term" value="P:viral budding from plasma membrane"/>
    <property type="evidence" value="ECO:0007669"/>
    <property type="project" value="UniProtKB-UniRule"/>
</dbReference>
<dbReference type="CDD" id="cd15483">
    <property type="entry name" value="Influenza_NA"/>
    <property type="match status" value="1"/>
</dbReference>
<dbReference type="Gene3D" id="2.120.10.10">
    <property type="match status" value="1"/>
</dbReference>
<dbReference type="HAMAP" id="MF_04071">
    <property type="entry name" value="INFV_NRAM"/>
    <property type="match status" value="1"/>
</dbReference>
<dbReference type="InterPro" id="IPR001860">
    <property type="entry name" value="Glyco_hydro_34"/>
</dbReference>
<dbReference type="InterPro" id="IPR033654">
    <property type="entry name" value="Sialidase_Influenza_A/B"/>
</dbReference>
<dbReference type="InterPro" id="IPR036278">
    <property type="entry name" value="Sialidase_sf"/>
</dbReference>
<dbReference type="Pfam" id="PF00064">
    <property type="entry name" value="Neur"/>
    <property type="match status" value="1"/>
</dbReference>
<dbReference type="SUPFAM" id="SSF50939">
    <property type="entry name" value="Sialidases"/>
    <property type="match status" value="1"/>
</dbReference>
<organismHost>
    <name type="scientific">Homo sapiens</name>
    <name type="common">Human</name>
    <dbReference type="NCBI Taxonomy" id="9606"/>
</organismHost>
<organism>
    <name type="scientific">Influenza B virus (strain B/Yamagata/16/1988)</name>
    <dbReference type="NCBI Taxonomy" id="416674"/>
    <lineage>
        <taxon>Viruses</taxon>
        <taxon>Riboviria</taxon>
        <taxon>Orthornavirae</taxon>
        <taxon>Negarnaviricota</taxon>
        <taxon>Polyploviricotina</taxon>
        <taxon>Insthoviricetes</taxon>
        <taxon>Articulavirales</taxon>
        <taxon>Orthomyxoviridae</taxon>
        <taxon>Betainfluenzavirus</taxon>
        <taxon>Betainfluenzavirus influenzae</taxon>
        <taxon>Influenza B virus</taxon>
    </lineage>
</organism>
<proteinExistence type="inferred from homology"/>
<protein>
    <recommendedName>
        <fullName evidence="1">Neuraminidase</fullName>
        <ecNumber evidence="1">3.2.1.18</ecNumber>
    </recommendedName>
</protein>
<reference key="1">
    <citation type="journal article" date="1993" name="Virology">
        <title>Comparison of structure and sequence of influenza B/Yamagata and B/Beijing neuraminidases shows a conserved 'head' but much greater variability in the 'stalk' and NB protein.</title>
        <authorList>
            <person name="Burmeister W.P."/>
            <person name="Baudin F."/>
            <person name="Cusack S."/>
            <person name="Ruigrok R.W.H."/>
        </authorList>
    </citation>
    <scope>NUCLEOTIDE SEQUENCE [GENOMIC RNA]</scope>
</reference>
<reference key="2">
    <citation type="journal article" date="2005" name="N. Engl. J. Med.">
        <title>Neuraminidase inhibitors for influenza.</title>
        <authorList>
            <person name="Moscona A."/>
        </authorList>
    </citation>
    <scope>REVIEW</scope>
</reference>
<comment type="function">
    <text evidence="1">Catalyzes the removal of terminal sialic acid residues from viral and cellular glycoconjugates. Cleaves off the terminal sialic acids on the glycosylated HA during virus budding to facilitate virus release. Additionally helps virus spread through the circulation by further removing sialic acids from the cell surface. These cleavages prevent self-aggregation and ensure the efficient spread of the progeny virus from cell to cell. Otherwise, infection would be limited to one round of replication. Described as a receptor-destroying enzyme because it cleaves a terminal sialic acid from the cellular receptors. May facilitate viral invasion of the upper airways by cleaving the sialic acid moieties on the mucin of the airway epithelial cells. Likely to plays a role in the budding process through its association with lipid rafts during intracellular transport. May additionally display a raft-association independent effect on budding. Plays a role in the determination of host range restriction on replication and virulence. Sialidase activity in late endosome/lysosome traffic seems to enhance virus replication.</text>
</comment>
<comment type="catalytic activity">
    <reaction evidence="1">
        <text>Hydrolysis of alpha-(2-&gt;3)-, alpha-(2-&gt;6)-, alpha-(2-&gt;8)- glycosidic linkages of terminal sialic acid residues in oligosaccharides, glycoproteins, glycolipids, colominic acid and synthetic substrates.</text>
        <dbReference type="EC" id="3.2.1.18"/>
    </reaction>
</comment>
<comment type="cofactor">
    <cofactor evidence="1">
        <name>Ca(2+)</name>
        <dbReference type="ChEBI" id="CHEBI:29108"/>
    </cofactor>
</comment>
<comment type="activity regulation">
    <text evidence="1">Inhibited by the neuraminidase inhibitors zanamivir (Relenza) and oseltamivir (Tamiflu). These drugs interfere with the release of progeny virus from infected cells and are effective against all influenza strains. Resistance to neuraminidase inhibitors is quite rare.</text>
</comment>
<comment type="subunit">
    <text evidence="1">Homotetramer.</text>
</comment>
<comment type="subcellular location">
    <subcellularLocation>
        <location evidence="1">Virion membrane</location>
    </subcellularLocation>
    <subcellularLocation>
        <location evidence="1">Host apical cell membrane</location>
        <topology evidence="1">Single-pass type II membrane protein</topology>
    </subcellularLocation>
    <text evidence="1">Preferentially accumulates at the apical plasma membrane in infected polarized epithelial cells, which is the virus assembly site. Uses lipid rafts for cell surface transport and apical sorting. In the virion, forms a mushroom-shaped spike on the surface of the membrane.</text>
</comment>
<comment type="domain">
    <text evidence="1">Intact N-terminus is essential for virion morphogenesis. Possesses two apical sorting signals, one in the ectodomain, which is likely to be a glycan, and the other in the transmembrane domain. The transmembrane domain also plays a role in lipid raft association.</text>
</comment>
<comment type="PTM">
    <text evidence="1">N-glycosylated.</text>
</comment>
<comment type="miscellaneous">
    <text>The influenza B genome consist of 8 RNA segments. Genetic variation of hemagglutinin and/or neuraminidase genes results in the emergence of new influenza strains. The mechanism of variation can be the result of point mutations or the result of genetic reassortment between segments of two different strains.</text>
</comment>
<comment type="similarity">
    <text evidence="1">Belongs to the glycosyl hydrolase 34 family.</text>
</comment>
<evidence type="ECO:0000255" key="1">
    <source>
        <dbReference type="HAMAP-Rule" id="MF_04071"/>
    </source>
</evidence>